<reference key="1">
    <citation type="journal article" date="2009" name="Nature">
        <title>Evolution of pathogenicity and sexual reproduction in eight Candida genomes.</title>
        <authorList>
            <person name="Butler G."/>
            <person name="Rasmussen M.D."/>
            <person name="Lin M.F."/>
            <person name="Santos M.A.S."/>
            <person name="Sakthikumar S."/>
            <person name="Munro C.A."/>
            <person name="Rheinbay E."/>
            <person name="Grabherr M."/>
            <person name="Forche A."/>
            <person name="Reedy J.L."/>
            <person name="Agrafioti I."/>
            <person name="Arnaud M.B."/>
            <person name="Bates S."/>
            <person name="Brown A.J.P."/>
            <person name="Brunke S."/>
            <person name="Costanzo M.C."/>
            <person name="Fitzpatrick D.A."/>
            <person name="de Groot P.W.J."/>
            <person name="Harris D."/>
            <person name="Hoyer L.L."/>
            <person name="Hube B."/>
            <person name="Klis F.M."/>
            <person name="Kodira C."/>
            <person name="Lennard N."/>
            <person name="Logue M.E."/>
            <person name="Martin R."/>
            <person name="Neiman A.M."/>
            <person name="Nikolaou E."/>
            <person name="Quail M.A."/>
            <person name="Quinn J."/>
            <person name="Santos M.C."/>
            <person name="Schmitzberger F.F."/>
            <person name="Sherlock G."/>
            <person name="Shah P."/>
            <person name="Silverstein K.A.T."/>
            <person name="Skrzypek M.S."/>
            <person name="Soll D."/>
            <person name="Staggs R."/>
            <person name="Stansfield I."/>
            <person name="Stumpf M.P.H."/>
            <person name="Sudbery P.E."/>
            <person name="Srikantha T."/>
            <person name="Zeng Q."/>
            <person name="Berman J."/>
            <person name="Berriman M."/>
            <person name="Heitman J."/>
            <person name="Gow N.A.R."/>
            <person name="Lorenz M.C."/>
            <person name="Birren B.W."/>
            <person name="Kellis M."/>
            <person name="Cuomo C.A."/>
        </authorList>
    </citation>
    <scope>NUCLEOTIDE SEQUENCE [LARGE SCALE GENOMIC DNA]</scope>
    <source>
        <strain>ATCC 6260 / CBS 566 / DSM 6381 / JCM 1539 / NBRC 10279 / NRRL Y-324</strain>
    </source>
</reference>
<keyword id="KW-0067">ATP-binding</keyword>
<keyword id="KW-0963">Cytoplasm</keyword>
<keyword id="KW-0347">Helicase</keyword>
<keyword id="KW-0378">Hydrolase</keyword>
<keyword id="KW-0472">Membrane</keyword>
<keyword id="KW-0509">mRNA transport</keyword>
<keyword id="KW-0906">Nuclear pore complex</keyword>
<keyword id="KW-0547">Nucleotide-binding</keyword>
<keyword id="KW-0539">Nucleus</keyword>
<keyword id="KW-0653">Protein transport</keyword>
<keyword id="KW-1185">Reference proteome</keyword>
<keyword id="KW-0694">RNA-binding</keyword>
<keyword id="KW-0811">Translocation</keyword>
<keyword id="KW-0813">Transport</keyword>
<sequence>MPEEPVDSDASKLLESLSINKQGDSAPIKDEKPVVESENKVSDEQNSEPTKEPETKTETENNDSNLISSSYEVQVKLADLQADPNSPLYSVKSFEELGLSPELLKGLYAMKFNKPSKIQEKALPLLISNPPKNMIGQSQSGTGKTAAFSLTMLSRVDVNDPNTQCICLSPTRELARQTLEVITTMGKFTKVTTQLVVPQAMEKNQGTQAHIVVGTPGTLLDMIKRKLLRTGKVKVFVLDEADNMLDGQGLAAQCIRVKKVLPTSCQLVLFSATFPTEVRKYAEKFVPNANSLELKQEELNVDAIKQLYMDCDSEKHKAEVLSELYGLLTIGSSIIFVKTKATANYLYAKMKSEGHACSILHSDLDNSERDKLIDDFREGRSKVLITTNVLARGIDIASVSMVVNYDIPVDKDDKPDPSTYLHRIGRTGRFGRVGVAVSFVHDKKSYEDLEQIRSYFNDIEMTRVPTDDWDEVEKIVKKVLKK</sequence>
<name>DBP5_PICGU</name>
<dbReference type="EC" id="3.6.4.13"/>
<dbReference type="EMBL" id="CH408155">
    <property type="protein sequence ID" value="EDK36542.1"/>
    <property type="molecule type" value="Genomic_DNA"/>
</dbReference>
<dbReference type="RefSeq" id="XP_001487263.1">
    <property type="nucleotide sequence ID" value="XM_001487213.1"/>
</dbReference>
<dbReference type="SMR" id="A5DBI5"/>
<dbReference type="FunCoup" id="A5DBI5">
    <property type="interactions" value="775"/>
</dbReference>
<dbReference type="STRING" id="294746.A5DBI5"/>
<dbReference type="GeneID" id="5128846"/>
<dbReference type="KEGG" id="pgu:PGUG_00640"/>
<dbReference type="VEuPathDB" id="FungiDB:PGUG_00640"/>
<dbReference type="eggNOG" id="KOG0332">
    <property type="taxonomic scope" value="Eukaryota"/>
</dbReference>
<dbReference type="HOGENOM" id="CLU_003041_1_0_1"/>
<dbReference type="InParanoid" id="A5DBI5"/>
<dbReference type="OMA" id="IAAETRW"/>
<dbReference type="OrthoDB" id="10265785at2759"/>
<dbReference type="Proteomes" id="UP000001997">
    <property type="component" value="Unassembled WGS sequence"/>
</dbReference>
<dbReference type="GO" id="GO:0005934">
    <property type="term" value="C:cellular bud tip"/>
    <property type="evidence" value="ECO:0007669"/>
    <property type="project" value="EnsemblFungi"/>
</dbReference>
<dbReference type="GO" id="GO:0010494">
    <property type="term" value="C:cytoplasmic stress granule"/>
    <property type="evidence" value="ECO:0007669"/>
    <property type="project" value="EnsemblFungi"/>
</dbReference>
<dbReference type="GO" id="GO:0031965">
    <property type="term" value="C:nuclear membrane"/>
    <property type="evidence" value="ECO:0007669"/>
    <property type="project" value="UniProtKB-SubCell"/>
</dbReference>
<dbReference type="GO" id="GO:0044614">
    <property type="term" value="C:nuclear pore cytoplasmic filaments"/>
    <property type="evidence" value="ECO:0007669"/>
    <property type="project" value="EnsemblFungi"/>
</dbReference>
<dbReference type="GO" id="GO:0005524">
    <property type="term" value="F:ATP binding"/>
    <property type="evidence" value="ECO:0007669"/>
    <property type="project" value="UniProtKB-KW"/>
</dbReference>
<dbReference type="GO" id="GO:0016887">
    <property type="term" value="F:ATP hydrolysis activity"/>
    <property type="evidence" value="ECO:0007669"/>
    <property type="project" value="RHEA"/>
</dbReference>
<dbReference type="GO" id="GO:0000822">
    <property type="term" value="F:inositol hexakisphosphate binding"/>
    <property type="evidence" value="ECO:0007669"/>
    <property type="project" value="EnsemblFungi"/>
</dbReference>
<dbReference type="GO" id="GO:0003723">
    <property type="term" value="F:RNA binding"/>
    <property type="evidence" value="ECO:0007669"/>
    <property type="project" value="UniProtKB-KW"/>
</dbReference>
<dbReference type="GO" id="GO:0003724">
    <property type="term" value="F:RNA helicase activity"/>
    <property type="evidence" value="ECO:0007669"/>
    <property type="project" value="UniProtKB-EC"/>
</dbReference>
<dbReference type="GO" id="GO:0016973">
    <property type="term" value="P:poly(A)+ mRNA export from nucleus"/>
    <property type="evidence" value="ECO:0007669"/>
    <property type="project" value="EnsemblFungi"/>
</dbReference>
<dbReference type="GO" id="GO:0015031">
    <property type="term" value="P:protein transport"/>
    <property type="evidence" value="ECO:0007669"/>
    <property type="project" value="UniProtKB-KW"/>
</dbReference>
<dbReference type="GO" id="GO:0006415">
    <property type="term" value="P:translational termination"/>
    <property type="evidence" value="ECO:0007669"/>
    <property type="project" value="EnsemblFungi"/>
</dbReference>
<dbReference type="GO" id="GO:0006409">
    <property type="term" value="P:tRNA export from nucleus"/>
    <property type="evidence" value="ECO:0007669"/>
    <property type="project" value="EnsemblFungi"/>
</dbReference>
<dbReference type="CDD" id="cd17963">
    <property type="entry name" value="DEADc_DDX19_DDX25"/>
    <property type="match status" value="1"/>
</dbReference>
<dbReference type="CDD" id="cd18787">
    <property type="entry name" value="SF2_C_DEAD"/>
    <property type="match status" value="1"/>
</dbReference>
<dbReference type="FunFam" id="3.40.50.300:FF:000849">
    <property type="entry name" value="ATP-dependent RNA helicase DBP5"/>
    <property type="match status" value="1"/>
</dbReference>
<dbReference type="FunFam" id="3.40.50.300:FF:000318">
    <property type="entry name" value="ATP-dependent RNA helicase DDX19B"/>
    <property type="match status" value="1"/>
</dbReference>
<dbReference type="Gene3D" id="3.40.50.300">
    <property type="entry name" value="P-loop containing nucleotide triphosphate hydrolases"/>
    <property type="match status" value="2"/>
</dbReference>
<dbReference type="InterPro" id="IPR011545">
    <property type="entry name" value="DEAD/DEAH_box_helicase_dom"/>
</dbReference>
<dbReference type="InterPro" id="IPR014001">
    <property type="entry name" value="Helicase_ATP-bd"/>
</dbReference>
<dbReference type="InterPro" id="IPR001650">
    <property type="entry name" value="Helicase_C-like"/>
</dbReference>
<dbReference type="InterPro" id="IPR027417">
    <property type="entry name" value="P-loop_NTPase"/>
</dbReference>
<dbReference type="InterPro" id="IPR000629">
    <property type="entry name" value="RNA-helicase_DEAD-box_CS"/>
</dbReference>
<dbReference type="InterPro" id="IPR014014">
    <property type="entry name" value="RNA_helicase_DEAD_Q_motif"/>
</dbReference>
<dbReference type="PANTHER" id="PTHR47958">
    <property type="entry name" value="ATP-DEPENDENT RNA HELICASE DBP3"/>
    <property type="match status" value="1"/>
</dbReference>
<dbReference type="Pfam" id="PF00270">
    <property type="entry name" value="DEAD"/>
    <property type="match status" value="1"/>
</dbReference>
<dbReference type="Pfam" id="PF00271">
    <property type="entry name" value="Helicase_C"/>
    <property type="match status" value="1"/>
</dbReference>
<dbReference type="SMART" id="SM00487">
    <property type="entry name" value="DEXDc"/>
    <property type="match status" value="1"/>
</dbReference>
<dbReference type="SMART" id="SM00490">
    <property type="entry name" value="HELICc"/>
    <property type="match status" value="1"/>
</dbReference>
<dbReference type="SUPFAM" id="SSF52540">
    <property type="entry name" value="P-loop containing nucleoside triphosphate hydrolases"/>
    <property type="match status" value="1"/>
</dbReference>
<dbReference type="PROSITE" id="PS00039">
    <property type="entry name" value="DEAD_ATP_HELICASE"/>
    <property type="match status" value="1"/>
</dbReference>
<dbReference type="PROSITE" id="PS51192">
    <property type="entry name" value="HELICASE_ATP_BIND_1"/>
    <property type="match status" value="1"/>
</dbReference>
<dbReference type="PROSITE" id="PS51194">
    <property type="entry name" value="HELICASE_CTER"/>
    <property type="match status" value="1"/>
</dbReference>
<dbReference type="PROSITE" id="PS51195">
    <property type="entry name" value="Q_MOTIF"/>
    <property type="match status" value="1"/>
</dbReference>
<comment type="function">
    <text evidence="1">ATP-dependent RNA helicase associated with the nuclear pore complex and essential for mRNA export from the nucleus. May participate in a terminal step of mRNA export through the removal of proteins that accompany mRNA through the nucleopore complex. May also be involved in early transcription (By similarity).</text>
</comment>
<comment type="catalytic activity">
    <reaction>
        <text>ATP + H2O = ADP + phosphate + H(+)</text>
        <dbReference type="Rhea" id="RHEA:13065"/>
        <dbReference type="ChEBI" id="CHEBI:15377"/>
        <dbReference type="ChEBI" id="CHEBI:15378"/>
        <dbReference type="ChEBI" id="CHEBI:30616"/>
        <dbReference type="ChEBI" id="CHEBI:43474"/>
        <dbReference type="ChEBI" id="CHEBI:456216"/>
        <dbReference type="EC" id="3.6.4.13"/>
    </reaction>
</comment>
<comment type="subunit">
    <text evidence="1">Associates with the nuclear pore complex.</text>
</comment>
<comment type="subcellular location">
    <subcellularLocation>
        <location evidence="1">Cytoplasm</location>
    </subcellularLocation>
    <subcellularLocation>
        <location>Nucleus</location>
        <location>Nuclear pore complex</location>
    </subcellularLocation>
    <subcellularLocation>
        <location evidence="1">Nucleus membrane</location>
        <topology evidence="1">Peripheral membrane protein</topology>
        <orientation evidence="1">Cytoplasmic side</orientation>
    </subcellularLocation>
    <text evidence="1">Nuclear pore complex cytoplasmic fibrils.</text>
</comment>
<comment type="domain">
    <text>The Q motif is unique to and characteristic of the DEAD box family of RNA helicases and controls ATP binding and hydrolysis.</text>
</comment>
<comment type="similarity">
    <text evidence="5">Belongs to the DEAD box helicase family. DDX19/DBP5 subfamily.</text>
</comment>
<feature type="chain" id="PRO_0000294633" description="ATP-dependent RNA helicase DBP5">
    <location>
        <begin position="1"/>
        <end position="482"/>
    </location>
</feature>
<feature type="domain" description="Helicase ATP-binding" evidence="2">
    <location>
        <begin position="125"/>
        <end position="292"/>
    </location>
</feature>
<feature type="domain" description="Helicase C-terminal" evidence="3">
    <location>
        <begin position="303"/>
        <end position="480"/>
    </location>
</feature>
<feature type="region of interest" description="Disordered" evidence="4">
    <location>
        <begin position="1"/>
        <end position="67"/>
    </location>
</feature>
<feature type="short sequence motif" description="Q motif">
    <location>
        <begin position="92"/>
        <end position="120"/>
    </location>
</feature>
<feature type="short sequence motif" description="DEAD box">
    <location>
        <begin position="239"/>
        <end position="242"/>
    </location>
</feature>
<feature type="compositionally biased region" description="Basic and acidic residues" evidence="4">
    <location>
        <begin position="27"/>
        <end position="59"/>
    </location>
</feature>
<feature type="binding site" evidence="2">
    <location>
        <begin position="138"/>
        <end position="145"/>
    </location>
    <ligand>
        <name>ATP</name>
        <dbReference type="ChEBI" id="CHEBI:30616"/>
    </ligand>
</feature>
<proteinExistence type="inferred from homology"/>
<evidence type="ECO:0000250" key="1"/>
<evidence type="ECO:0000255" key="2">
    <source>
        <dbReference type="PROSITE-ProRule" id="PRU00541"/>
    </source>
</evidence>
<evidence type="ECO:0000255" key="3">
    <source>
        <dbReference type="PROSITE-ProRule" id="PRU00542"/>
    </source>
</evidence>
<evidence type="ECO:0000256" key="4">
    <source>
        <dbReference type="SAM" id="MobiDB-lite"/>
    </source>
</evidence>
<evidence type="ECO:0000305" key="5"/>
<accession>A5DBI5</accession>
<protein>
    <recommendedName>
        <fullName>ATP-dependent RNA helicase DBP5</fullName>
        <ecNumber>3.6.4.13</ecNumber>
    </recommendedName>
</protein>
<gene>
    <name type="primary">DBP5</name>
    <name type="ORF">PGUG_00640</name>
</gene>
<organism>
    <name type="scientific">Meyerozyma guilliermondii (strain ATCC 6260 / CBS 566 / DSM 6381 / JCM 1539 / NBRC 10279 / NRRL Y-324)</name>
    <name type="common">Yeast</name>
    <name type="synonym">Candida guilliermondii</name>
    <dbReference type="NCBI Taxonomy" id="294746"/>
    <lineage>
        <taxon>Eukaryota</taxon>
        <taxon>Fungi</taxon>
        <taxon>Dikarya</taxon>
        <taxon>Ascomycota</taxon>
        <taxon>Saccharomycotina</taxon>
        <taxon>Pichiomycetes</taxon>
        <taxon>Debaryomycetaceae</taxon>
        <taxon>Meyerozyma</taxon>
    </lineage>
</organism>